<gene>
    <name evidence="1" type="primary">murD</name>
    <name type="ordered locus">NWMN_1093</name>
</gene>
<proteinExistence type="inferred from homology"/>
<dbReference type="EC" id="6.3.2.9" evidence="1"/>
<dbReference type="EMBL" id="AP009351">
    <property type="protein sequence ID" value="BAF67365.1"/>
    <property type="molecule type" value="Genomic_DNA"/>
</dbReference>
<dbReference type="RefSeq" id="WP_000935991.1">
    <property type="nucleotide sequence ID" value="NZ_JBBIAE010000001.1"/>
</dbReference>
<dbReference type="SMR" id="A6QG83"/>
<dbReference type="KEGG" id="sae:NWMN_1093"/>
<dbReference type="HOGENOM" id="CLU_032540_0_1_9"/>
<dbReference type="UniPathway" id="UPA00219"/>
<dbReference type="Proteomes" id="UP000006386">
    <property type="component" value="Chromosome"/>
</dbReference>
<dbReference type="GO" id="GO:0005737">
    <property type="term" value="C:cytoplasm"/>
    <property type="evidence" value="ECO:0007669"/>
    <property type="project" value="UniProtKB-SubCell"/>
</dbReference>
<dbReference type="GO" id="GO:0005524">
    <property type="term" value="F:ATP binding"/>
    <property type="evidence" value="ECO:0007669"/>
    <property type="project" value="UniProtKB-UniRule"/>
</dbReference>
<dbReference type="GO" id="GO:0008764">
    <property type="term" value="F:UDP-N-acetylmuramoylalanine-D-glutamate ligase activity"/>
    <property type="evidence" value="ECO:0007669"/>
    <property type="project" value="UniProtKB-UniRule"/>
</dbReference>
<dbReference type="GO" id="GO:0051301">
    <property type="term" value="P:cell division"/>
    <property type="evidence" value="ECO:0007669"/>
    <property type="project" value="UniProtKB-KW"/>
</dbReference>
<dbReference type="GO" id="GO:0071555">
    <property type="term" value="P:cell wall organization"/>
    <property type="evidence" value="ECO:0007669"/>
    <property type="project" value="UniProtKB-KW"/>
</dbReference>
<dbReference type="GO" id="GO:0009252">
    <property type="term" value="P:peptidoglycan biosynthetic process"/>
    <property type="evidence" value="ECO:0007669"/>
    <property type="project" value="UniProtKB-UniRule"/>
</dbReference>
<dbReference type="GO" id="GO:0008360">
    <property type="term" value="P:regulation of cell shape"/>
    <property type="evidence" value="ECO:0007669"/>
    <property type="project" value="UniProtKB-KW"/>
</dbReference>
<dbReference type="Gene3D" id="3.90.190.20">
    <property type="entry name" value="Mur ligase, C-terminal domain"/>
    <property type="match status" value="1"/>
</dbReference>
<dbReference type="Gene3D" id="3.40.1190.10">
    <property type="entry name" value="Mur-like, catalytic domain"/>
    <property type="match status" value="1"/>
</dbReference>
<dbReference type="Gene3D" id="3.40.50.720">
    <property type="entry name" value="NAD(P)-binding Rossmann-like Domain"/>
    <property type="match status" value="1"/>
</dbReference>
<dbReference type="HAMAP" id="MF_00639">
    <property type="entry name" value="MurD"/>
    <property type="match status" value="1"/>
</dbReference>
<dbReference type="InterPro" id="IPR036565">
    <property type="entry name" value="Mur-like_cat_sf"/>
</dbReference>
<dbReference type="InterPro" id="IPR004101">
    <property type="entry name" value="Mur_ligase_C"/>
</dbReference>
<dbReference type="InterPro" id="IPR036615">
    <property type="entry name" value="Mur_ligase_C_dom_sf"/>
</dbReference>
<dbReference type="InterPro" id="IPR013221">
    <property type="entry name" value="Mur_ligase_cen"/>
</dbReference>
<dbReference type="InterPro" id="IPR005762">
    <property type="entry name" value="MurD"/>
</dbReference>
<dbReference type="NCBIfam" id="TIGR01087">
    <property type="entry name" value="murD"/>
    <property type="match status" value="1"/>
</dbReference>
<dbReference type="PANTHER" id="PTHR43692">
    <property type="entry name" value="UDP-N-ACETYLMURAMOYLALANINE--D-GLUTAMATE LIGASE"/>
    <property type="match status" value="1"/>
</dbReference>
<dbReference type="PANTHER" id="PTHR43692:SF1">
    <property type="entry name" value="UDP-N-ACETYLMURAMOYLALANINE--D-GLUTAMATE LIGASE"/>
    <property type="match status" value="1"/>
</dbReference>
<dbReference type="Pfam" id="PF02875">
    <property type="entry name" value="Mur_ligase_C"/>
    <property type="match status" value="1"/>
</dbReference>
<dbReference type="Pfam" id="PF08245">
    <property type="entry name" value="Mur_ligase_M"/>
    <property type="match status" value="1"/>
</dbReference>
<dbReference type="Pfam" id="PF21799">
    <property type="entry name" value="MurD-like_N"/>
    <property type="match status" value="1"/>
</dbReference>
<dbReference type="SUPFAM" id="SSF51984">
    <property type="entry name" value="MurCD N-terminal domain"/>
    <property type="match status" value="1"/>
</dbReference>
<dbReference type="SUPFAM" id="SSF53623">
    <property type="entry name" value="MurD-like peptide ligases, catalytic domain"/>
    <property type="match status" value="1"/>
</dbReference>
<dbReference type="SUPFAM" id="SSF53244">
    <property type="entry name" value="MurD-like peptide ligases, peptide-binding domain"/>
    <property type="match status" value="1"/>
</dbReference>
<sequence length="449" mass="49844">MLNYTGLENKNVLVVGLAKSGYEAAKLLSKLGANVTVNDGKDLSQDAHAKDLESMGISVVSGSHPLTLLDNNPIIVKNPGIPYTVSIIDEAVKRGLKILTEVELSYLISEAPIIAVTGTNGKTTVTSLIGDMFKKSRLTGRLSGNIGYVASKVAQEVKPTDYLVTELSSFQLLGIEKYKPHIAIITNIYSAHLDYHENLENYQNAKKQIYKNQTEEDYLICNYHQRQVIESEELKAKTLYFSTQQEVDGIYIKDGFIVYKGVRIINTEDLVLPGEHNLENILAAVLACILAGVPIKAIIDSLTTFSGIEHRLQYVGTNRTNKYYNDSKATNTLATQFALNSFNQPIIWLCGGLDRGNEFDELIPYMENVRAMVVFGQTKAKFAKLGNSQGKSVIEANNVEDAVDKVQDIIEPNDVVLLSPACASWDQYSTFEERGEKFIERFRAHLPSY</sequence>
<comment type="function">
    <text evidence="1">Cell wall formation. Catalyzes the addition of glutamate to the nucleotide precursor UDP-N-acetylmuramoyl-L-alanine (UMA).</text>
</comment>
<comment type="catalytic activity">
    <reaction evidence="1">
        <text>UDP-N-acetyl-alpha-D-muramoyl-L-alanine + D-glutamate + ATP = UDP-N-acetyl-alpha-D-muramoyl-L-alanyl-D-glutamate + ADP + phosphate + H(+)</text>
        <dbReference type="Rhea" id="RHEA:16429"/>
        <dbReference type="ChEBI" id="CHEBI:15378"/>
        <dbReference type="ChEBI" id="CHEBI:29986"/>
        <dbReference type="ChEBI" id="CHEBI:30616"/>
        <dbReference type="ChEBI" id="CHEBI:43474"/>
        <dbReference type="ChEBI" id="CHEBI:83898"/>
        <dbReference type="ChEBI" id="CHEBI:83900"/>
        <dbReference type="ChEBI" id="CHEBI:456216"/>
        <dbReference type="EC" id="6.3.2.9"/>
    </reaction>
</comment>
<comment type="pathway">
    <text evidence="1">Cell wall biogenesis; peptidoglycan biosynthesis.</text>
</comment>
<comment type="subcellular location">
    <subcellularLocation>
        <location evidence="1">Cytoplasm</location>
    </subcellularLocation>
</comment>
<comment type="similarity">
    <text evidence="1">Belongs to the MurCDEF family.</text>
</comment>
<keyword id="KW-0067">ATP-binding</keyword>
<keyword id="KW-0131">Cell cycle</keyword>
<keyword id="KW-0132">Cell division</keyword>
<keyword id="KW-0133">Cell shape</keyword>
<keyword id="KW-0961">Cell wall biogenesis/degradation</keyword>
<keyword id="KW-0963">Cytoplasm</keyword>
<keyword id="KW-0436">Ligase</keyword>
<keyword id="KW-0547">Nucleotide-binding</keyword>
<keyword id="KW-0573">Peptidoglycan synthesis</keyword>
<feature type="chain" id="PRO_1000072684" description="UDP-N-acetylmuramoylalanine--D-glutamate ligase">
    <location>
        <begin position="1"/>
        <end position="449"/>
    </location>
</feature>
<feature type="binding site" evidence="1">
    <location>
        <begin position="118"/>
        <end position="124"/>
    </location>
    <ligand>
        <name>ATP</name>
        <dbReference type="ChEBI" id="CHEBI:30616"/>
    </ligand>
</feature>
<protein>
    <recommendedName>
        <fullName evidence="1">UDP-N-acetylmuramoylalanine--D-glutamate ligase</fullName>
        <ecNumber evidence="1">6.3.2.9</ecNumber>
    </recommendedName>
    <alternativeName>
        <fullName evidence="1">D-glutamic acid-adding enzyme</fullName>
    </alternativeName>
    <alternativeName>
        <fullName evidence="1">UDP-N-acetylmuramoyl-L-alanyl-D-glutamate synthetase</fullName>
    </alternativeName>
</protein>
<organism>
    <name type="scientific">Staphylococcus aureus (strain Newman)</name>
    <dbReference type="NCBI Taxonomy" id="426430"/>
    <lineage>
        <taxon>Bacteria</taxon>
        <taxon>Bacillati</taxon>
        <taxon>Bacillota</taxon>
        <taxon>Bacilli</taxon>
        <taxon>Bacillales</taxon>
        <taxon>Staphylococcaceae</taxon>
        <taxon>Staphylococcus</taxon>
    </lineage>
</organism>
<reference key="1">
    <citation type="journal article" date="2008" name="J. Bacteriol.">
        <title>Genome sequence of Staphylococcus aureus strain Newman and comparative analysis of staphylococcal genomes: polymorphism and evolution of two major pathogenicity islands.</title>
        <authorList>
            <person name="Baba T."/>
            <person name="Bae T."/>
            <person name="Schneewind O."/>
            <person name="Takeuchi F."/>
            <person name="Hiramatsu K."/>
        </authorList>
    </citation>
    <scope>NUCLEOTIDE SEQUENCE [LARGE SCALE GENOMIC DNA]</scope>
    <source>
        <strain>Newman</strain>
    </source>
</reference>
<name>MURD_STAAE</name>
<accession>A6QG83</accession>
<evidence type="ECO:0000255" key="1">
    <source>
        <dbReference type="HAMAP-Rule" id="MF_00639"/>
    </source>
</evidence>